<dbReference type="EMBL" id="AL021633">
    <property type="protein sequence ID" value="CAA16541.1"/>
    <property type="molecule type" value="Genomic_DNA"/>
</dbReference>
<dbReference type="EMBL" id="AL080283">
    <property type="status" value="NOT_ANNOTATED_CDS"/>
    <property type="molecule type" value="Genomic_DNA"/>
</dbReference>
<dbReference type="EMBL" id="AL161578">
    <property type="protein sequence ID" value="CAB79856.1"/>
    <property type="molecule type" value="Genomic_DNA"/>
</dbReference>
<dbReference type="EMBL" id="CP002687">
    <property type="protein sequence ID" value="AEE85902.2"/>
    <property type="molecule type" value="Genomic_DNA"/>
</dbReference>
<dbReference type="EMBL" id="AY800638">
    <property type="protein sequence ID" value="AAV68874.1"/>
    <property type="status" value="ALT_INIT"/>
    <property type="molecule type" value="mRNA"/>
</dbReference>
<dbReference type="EMBL" id="AY924826">
    <property type="protein sequence ID" value="AAX23901.1"/>
    <property type="status" value="ALT_INIT"/>
    <property type="molecule type" value="Genomic_DNA"/>
</dbReference>
<dbReference type="PIR" id="T04505">
    <property type="entry name" value="T04505"/>
</dbReference>
<dbReference type="RefSeq" id="NP_001320103.1">
    <property type="nucleotide sequence ID" value="NM_001342075.1"/>
</dbReference>
<dbReference type="BioGRID" id="14551">
    <property type="interactions" value="1"/>
</dbReference>
<dbReference type="STRING" id="3702.Q5Q0B3"/>
<dbReference type="PaxDb" id="3702-AT4G31380.1"/>
<dbReference type="ProteomicsDB" id="230603"/>
<dbReference type="EnsemblPlants" id="AT4G31380.1">
    <property type="protein sequence ID" value="AT4G31380.1"/>
    <property type="gene ID" value="AT4G31380"/>
</dbReference>
<dbReference type="GeneID" id="28720195"/>
<dbReference type="Gramene" id="AT4G31380.1">
    <property type="protein sequence ID" value="AT4G31380.1"/>
    <property type="gene ID" value="AT4G31380"/>
</dbReference>
<dbReference type="KEGG" id="ath:AT4G31380"/>
<dbReference type="Araport" id="AT4G31380"/>
<dbReference type="TAIR" id="AT4G31380">
    <property type="gene designation" value="FLP1"/>
</dbReference>
<dbReference type="eggNOG" id="ENOG502S12G">
    <property type="taxonomic scope" value="Eukaryota"/>
</dbReference>
<dbReference type="HOGENOM" id="CLU_121629_0_1_1"/>
<dbReference type="InParanoid" id="Q5Q0B3"/>
<dbReference type="OMA" id="QHTIITM"/>
<dbReference type="OrthoDB" id="612242at2759"/>
<dbReference type="PRO" id="PR:Q5Q0B3"/>
<dbReference type="Proteomes" id="UP000006548">
    <property type="component" value="Chromosome 4"/>
</dbReference>
<dbReference type="ExpressionAtlas" id="Q5Q0B3">
    <property type="expression patterns" value="baseline and differential"/>
</dbReference>
<dbReference type="GO" id="GO:0009909">
    <property type="term" value="P:regulation of flower development"/>
    <property type="evidence" value="ECO:0007669"/>
    <property type="project" value="InterPro"/>
</dbReference>
<dbReference type="InterPro" id="IPR039274">
    <property type="entry name" value="FPF1"/>
</dbReference>
<dbReference type="PANTHER" id="PTHR33433">
    <property type="entry name" value="FLOWERING-PROMOTING FACTOR 1-LIKE PROTEIN 1"/>
    <property type="match status" value="1"/>
</dbReference>
<accession>Q5Q0B3</accession>
<accession>O49587</accession>
<feature type="chain" id="PRO_0000417314" description="Flowering-promoting factor 1-like protein 1">
    <location>
        <begin position="1"/>
        <end position="124"/>
    </location>
</feature>
<feature type="region of interest" description="Disordered" evidence="1">
    <location>
        <begin position="19"/>
        <end position="42"/>
    </location>
</feature>
<feature type="compositionally biased region" description="Low complexity" evidence="1">
    <location>
        <begin position="22"/>
        <end position="39"/>
    </location>
</feature>
<protein>
    <recommendedName>
        <fullName>Flowering-promoting factor 1-like protein 1</fullName>
    </recommendedName>
    <alternativeName>
        <fullName>FPF1-like protein 1</fullName>
    </alternativeName>
</protein>
<proteinExistence type="evidence at transcript level"/>
<name>FLP1_ARATH</name>
<evidence type="ECO:0000256" key="1">
    <source>
        <dbReference type="SAM" id="MobiDB-lite"/>
    </source>
</evidence>
<evidence type="ECO:0000269" key="2">
    <source ref="5"/>
</evidence>
<evidence type="ECO:0000305" key="3"/>
<organism>
    <name type="scientific">Arabidopsis thaliana</name>
    <name type="common">Mouse-ear cress</name>
    <dbReference type="NCBI Taxonomy" id="3702"/>
    <lineage>
        <taxon>Eukaryota</taxon>
        <taxon>Viridiplantae</taxon>
        <taxon>Streptophyta</taxon>
        <taxon>Embryophyta</taxon>
        <taxon>Tracheophyta</taxon>
        <taxon>Spermatophyta</taxon>
        <taxon>Magnoliopsida</taxon>
        <taxon>eudicotyledons</taxon>
        <taxon>Gunneridae</taxon>
        <taxon>Pentapetalae</taxon>
        <taxon>rosids</taxon>
        <taxon>malvids</taxon>
        <taxon>Brassicales</taxon>
        <taxon>Brassicaceae</taxon>
        <taxon>Camelineae</taxon>
        <taxon>Arabidopsis</taxon>
    </lineage>
</organism>
<reference key="1">
    <citation type="journal article" date="1999" name="Nature">
        <title>Sequence and analysis of chromosome 4 of the plant Arabidopsis thaliana.</title>
        <authorList>
            <person name="Mayer K.F.X."/>
            <person name="Schueller C."/>
            <person name="Wambutt R."/>
            <person name="Murphy G."/>
            <person name="Volckaert G."/>
            <person name="Pohl T."/>
            <person name="Duesterhoeft A."/>
            <person name="Stiekema W."/>
            <person name="Entian K.-D."/>
            <person name="Terryn N."/>
            <person name="Harris B."/>
            <person name="Ansorge W."/>
            <person name="Brandt P."/>
            <person name="Grivell L.A."/>
            <person name="Rieger M."/>
            <person name="Weichselgartner M."/>
            <person name="de Simone V."/>
            <person name="Obermaier B."/>
            <person name="Mache R."/>
            <person name="Mueller M."/>
            <person name="Kreis M."/>
            <person name="Delseny M."/>
            <person name="Puigdomenech P."/>
            <person name="Watson M."/>
            <person name="Schmidtheini T."/>
            <person name="Reichert B."/>
            <person name="Portetelle D."/>
            <person name="Perez-Alonso M."/>
            <person name="Boutry M."/>
            <person name="Bancroft I."/>
            <person name="Vos P."/>
            <person name="Hoheisel J."/>
            <person name="Zimmermann W."/>
            <person name="Wedler H."/>
            <person name="Ridley P."/>
            <person name="Langham S.-A."/>
            <person name="McCullagh B."/>
            <person name="Bilham L."/>
            <person name="Robben J."/>
            <person name="van der Schueren J."/>
            <person name="Grymonprez B."/>
            <person name="Chuang Y.-J."/>
            <person name="Vandenbussche F."/>
            <person name="Braeken M."/>
            <person name="Weltjens I."/>
            <person name="Voet M."/>
            <person name="Bastiaens I."/>
            <person name="Aert R."/>
            <person name="Defoor E."/>
            <person name="Weitzenegger T."/>
            <person name="Bothe G."/>
            <person name="Ramsperger U."/>
            <person name="Hilbert H."/>
            <person name="Braun M."/>
            <person name="Holzer E."/>
            <person name="Brandt A."/>
            <person name="Peters S."/>
            <person name="van Staveren M."/>
            <person name="Dirkse W."/>
            <person name="Mooijman P."/>
            <person name="Klein Lankhorst R."/>
            <person name="Rose M."/>
            <person name="Hauf J."/>
            <person name="Koetter P."/>
            <person name="Berneiser S."/>
            <person name="Hempel S."/>
            <person name="Feldpausch M."/>
            <person name="Lamberth S."/>
            <person name="Van den Daele H."/>
            <person name="De Keyser A."/>
            <person name="Buysshaert C."/>
            <person name="Gielen J."/>
            <person name="Villarroel R."/>
            <person name="De Clercq R."/>
            <person name="van Montagu M."/>
            <person name="Rogers J."/>
            <person name="Cronin A."/>
            <person name="Quail M.A."/>
            <person name="Bray-Allen S."/>
            <person name="Clark L."/>
            <person name="Doggett J."/>
            <person name="Hall S."/>
            <person name="Kay M."/>
            <person name="Lennard N."/>
            <person name="McLay K."/>
            <person name="Mayes R."/>
            <person name="Pettett A."/>
            <person name="Rajandream M.A."/>
            <person name="Lyne M."/>
            <person name="Benes V."/>
            <person name="Rechmann S."/>
            <person name="Borkova D."/>
            <person name="Bloecker H."/>
            <person name="Scharfe M."/>
            <person name="Grimm M."/>
            <person name="Loehnert T.-H."/>
            <person name="Dose S."/>
            <person name="de Haan M."/>
            <person name="Maarse A.C."/>
            <person name="Schaefer M."/>
            <person name="Mueller-Auer S."/>
            <person name="Gabel C."/>
            <person name="Fuchs M."/>
            <person name="Fartmann B."/>
            <person name="Granderath K."/>
            <person name="Dauner D."/>
            <person name="Herzl A."/>
            <person name="Neumann S."/>
            <person name="Argiriou A."/>
            <person name="Vitale D."/>
            <person name="Liguori R."/>
            <person name="Piravandi E."/>
            <person name="Massenet O."/>
            <person name="Quigley F."/>
            <person name="Clabauld G."/>
            <person name="Muendlein A."/>
            <person name="Felber R."/>
            <person name="Schnabl S."/>
            <person name="Hiller R."/>
            <person name="Schmidt W."/>
            <person name="Lecharny A."/>
            <person name="Aubourg S."/>
            <person name="Chefdor F."/>
            <person name="Cooke R."/>
            <person name="Berger C."/>
            <person name="Monfort A."/>
            <person name="Casacuberta E."/>
            <person name="Gibbons T."/>
            <person name="Weber N."/>
            <person name="Vandenbol M."/>
            <person name="Bargues M."/>
            <person name="Terol J."/>
            <person name="Torres A."/>
            <person name="Perez-Perez A."/>
            <person name="Purnelle B."/>
            <person name="Bent E."/>
            <person name="Johnson S."/>
            <person name="Tacon D."/>
            <person name="Jesse T."/>
            <person name="Heijnen L."/>
            <person name="Schwarz S."/>
            <person name="Scholler P."/>
            <person name="Heber S."/>
            <person name="Francs P."/>
            <person name="Bielke C."/>
            <person name="Frishman D."/>
            <person name="Haase D."/>
            <person name="Lemcke K."/>
            <person name="Mewes H.-W."/>
            <person name="Stocker S."/>
            <person name="Zaccaria P."/>
            <person name="Bevan M."/>
            <person name="Wilson R.K."/>
            <person name="de la Bastide M."/>
            <person name="Habermann K."/>
            <person name="Parnell L."/>
            <person name="Dedhia N."/>
            <person name="Gnoj L."/>
            <person name="Schutz K."/>
            <person name="Huang E."/>
            <person name="Spiegel L."/>
            <person name="Sekhon M."/>
            <person name="Murray J."/>
            <person name="Sheet P."/>
            <person name="Cordes M."/>
            <person name="Abu-Threideh J."/>
            <person name="Stoneking T."/>
            <person name="Kalicki J."/>
            <person name="Graves T."/>
            <person name="Harmon G."/>
            <person name="Edwards J."/>
            <person name="Latreille P."/>
            <person name="Courtney L."/>
            <person name="Cloud J."/>
            <person name="Abbott A."/>
            <person name="Scott K."/>
            <person name="Johnson D."/>
            <person name="Minx P."/>
            <person name="Bentley D."/>
            <person name="Fulton B."/>
            <person name="Miller N."/>
            <person name="Greco T."/>
            <person name="Kemp K."/>
            <person name="Kramer J."/>
            <person name="Fulton L."/>
            <person name="Mardis E."/>
            <person name="Dante M."/>
            <person name="Pepin K."/>
            <person name="Hillier L.W."/>
            <person name="Nelson J."/>
            <person name="Spieth J."/>
            <person name="Ryan E."/>
            <person name="Andrews S."/>
            <person name="Geisel C."/>
            <person name="Layman D."/>
            <person name="Du H."/>
            <person name="Ali J."/>
            <person name="Berghoff A."/>
            <person name="Jones K."/>
            <person name="Drone K."/>
            <person name="Cotton M."/>
            <person name="Joshu C."/>
            <person name="Antonoiu B."/>
            <person name="Zidanic M."/>
            <person name="Strong C."/>
            <person name="Sun H."/>
            <person name="Lamar B."/>
            <person name="Yordan C."/>
            <person name="Ma P."/>
            <person name="Zhong J."/>
            <person name="Preston R."/>
            <person name="Vil D."/>
            <person name="Shekher M."/>
            <person name="Matero A."/>
            <person name="Shah R."/>
            <person name="Swaby I.K."/>
            <person name="O'Shaughnessy A."/>
            <person name="Rodriguez M."/>
            <person name="Hoffman J."/>
            <person name="Till S."/>
            <person name="Granat S."/>
            <person name="Shohdy N."/>
            <person name="Hasegawa A."/>
            <person name="Hameed A."/>
            <person name="Lodhi M."/>
            <person name="Johnson A."/>
            <person name="Chen E."/>
            <person name="Marra M.A."/>
            <person name="Martienssen R."/>
            <person name="McCombie W.R."/>
        </authorList>
    </citation>
    <scope>NUCLEOTIDE SEQUENCE [LARGE SCALE GENOMIC DNA]</scope>
    <source>
        <strain>cv. Columbia</strain>
    </source>
</reference>
<reference key="2">
    <citation type="journal article" date="2017" name="Plant J.">
        <title>Araport11: a complete reannotation of the Arabidopsis thaliana reference genome.</title>
        <authorList>
            <person name="Cheng C.Y."/>
            <person name="Krishnakumar V."/>
            <person name="Chan A.P."/>
            <person name="Thibaud-Nissen F."/>
            <person name="Schobel S."/>
            <person name="Town C.D."/>
        </authorList>
    </citation>
    <scope>GENOME REANNOTATION</scope>
    <source>
        <strain>cv. Columbia</strain>
    </source>
</reference>
<reference key="3">
    <citation type="submission" date="2004-10" db="EMBL/GenBank/DDBJ databases">
        <title>Reconstruction of cDNA sequences for hypothetical genes in Arabidopsis thaliana from 5' and 3' RACE products.</title>
        <authorList>
            <person name="Xiao Y.-L."/>
            <person name="Underwood B.A."/>
            <person name="Moskal W.A. Jr."/>
            <person name="Torian U."/>
            <person name="Redman J.C."/>
            <person name="Wu H.C."/>
            <person name="Utterback T."/>
            <person name="Town C.D."/>
        </authorList>
    </citation>
    <scope>NUCLEOTIDE SEQUENCE [LARGE SCALE MRNA]</scope>
    <source>
        <strain>cv. Columbia</strain>
    </source>
</reference>
<reference key="4">
    <citation type="submission" date="2005-02" db="EMBL/GenBank/DDBJ databases">
        <authorList>
            <person name="Underwood B.A."/>
            <person name="Xiao Y.-L."/>
            <person name="Moskal W.A. Jr."/>
            <person name="Monaghan E.L."/>
            <person name="Wang W."/>
            <person name="Redman J.C."/>
            <person name="Wu H.C."/>
            <person name="Utterback T."/>
            <person name="Town C.D."/>
        </authorList>
    </citation>
    <scope>NUCLEOTIDE SEQUENCE [LARGE SCALE GENOMIC DNA]</scope>
    <source>
        <strain>cv. Columbia</strain>
    </source>
</reference>
<reference key="5">
    <citation type="book" date="2000" name="Proceedings of the 11th international conference on Arabidopsis research">
        <title>The FPF gene family and flowering time control in Arabidopsis.</title>
        <authorList>
            <person name="Borner R."/>
            <person name="Kampmann G."/>
            <person name="Apel K."/>
            <person name="Melzer S."/>
        </authorList>
    </citation>
    <scope>GENE FAMILY</scope>
    <scope>FUNCTION</scope>
    <scope>TISSUE SPECIFICITY</scope>
</reference>
<keyword id="KW-1185">Reference proteome</keyword>
<sequence>MSGVWVFNKNGVMRLVENPYNQSAGDSSESSSSGGNQQQRMRRKILVHLPSSEVVSSYGSLEKILKNLGWERYYSGDNTDHLLQFHKRTSIDLISLPRDFSKFNSIHMYDIVVKNPNVFHVRDM</sequence>
<comment type="function">
    <text evidence="2">Modulates the competence to flowering of apical meristems.</text>
</comment>
<comment type="tissue specificity">
    <text evidence="2">Expressed in roots, flowers, and at a low level, in leaves.</text>
</comment>
<comment type="miscellaneous">
    <text>Overexpression of FLP1 results in shortening of the time to flowering.</text>
</comment>
<comment type="similarity">
    <text evidence="3">Belongs to the FPF1 family.</text>
</comment>
<comment type="sequence caution" evidence="3">
    <conflict type="erroneous initiation">
        <sequence resource="EMBL-CDS" id="AAV68874"/>
    </conflict>
    <text>Extended N-terminus.</text>
</comment>
<comment type="sequence caution" evidence="3">
    <conflict type="erroneous initiation">
        <sequence resource="EMBL-CDS" id="AAX23901"/>
    </conflict>
    <text>Extended N-terminus.</text>
</comment>
<gene>
    <name type="primary">FLP1</name>
    <name type="ordered locus">At4g31380</name>
    <name type="ORF">F3L17.1</name>
    <name type="ORF">F8F16</name>
</gene>